<protein>
    <recommendedName>
        <fullName evidence="1">Small ribosomal subunit protein uS15</fullName>
    </recommendedName>
    <alternativeName>
        <fullName evidence="2">30S ribosomal protein S15</fullName>
    </alternativeName>
</protein>
<evidence type="ECO:0000255" key="1">
    <source>
        <dbReference type="HAMAP-Rule" id="MF_01343"/>
    </source>
</evidence>
<evidence type="ECO:0000305" key="2"/>
<gene>
    <name evidence="1" type="primary">rpsO</name>
    <name type="ordered locus">SAUSA300_1166</name>
</gene>
<sequence>MAISQERKNEIIKEYRVHETDTGSPEVQIAVLTAEINAVNEHLRTHKKDHHSRRGLLKMVGRRRHLLNYLRSKDIQRYRELIKSLGIRR</sequence>
<dbReference type="EMBL" id="CP000255">
    <property type="protein sequence ID" value="ABD22079.1"/>
    <property type="molecule type" value="Genomic_DNA"/>
</dbReference>
<dbReference type="RefSeq" id="WP_001018328.1">
    <property type="nucleotide sequence ID" value="NZ_CP027476.1"/>
</dbReference>
<dbReference type="SMR" id="Q2FHG5"/>
<dbReference type="KEGG" id="saa:SAUSA300_1166"/>
<dbReference type="HOGENOM" id="CLU_148518_0_0_9"/>
<dbReference type="OMA" id="RINYLTE"/>
<dbReference type="Proteomes" id="UP000001939">
    <property type="component" value="Chromosome"/>
</dbReference>
<dbReference type="GO" id="GO:0022627">
    <property type="term" value="C:cytosolic small ribosomal subunit"/>
    <property type="evidence" value="ECO:0007669"/>
    <property type="project" value="TreeGrafter"/>
</dbReference>
<dbReference type="GO" id="GO:0019843">
    <property type="term" value="F:rRNA binding"/>
    <property type="evidence" value="ECO:0007669"/>
    <property type="project" value="UniProtKB-UniRule"/>
</dbReference>
<dbReference type="GO" id="GO:0003735">
    <property type="term" value="F:structural constituent of ribosome"/>
    <property type="evidence" value="ECO:0007669"/>
    <property type="project" value="InterPro"/>
</dbReference>
<dbReference type="GO" id="GO:0006412">
    <property type="term" value="P:translation"/>
    <property type="evidence" value="ECO:0007669"/>
    <property type="project" value="UniProtKB-UniRule"/>
</dbReference>
<dbReference type="CDD" id="cd00353">
    <property type="entry name" value="Ribosomal_S15p_S13e"/>
    <property type="match status" value="1"/>
</dbReference>
<dbReference type="FunFam" id="1.10.287.10:FF:000002">
    <property type="entry name" value="30S ribosomal protein S15"/>
    <property type="match status" value="1"/>
</dbReference>
<dbReference type="Gene3D" id="6.10.250.3130">
    <property type="match status" value="1"/>
</dbReference>
<dbReference type="Gene3D" id="1.10.287.10">
    <property type="entry name" value="S15/NS1, RNA-binding"/>
    <property type="match status" value="1"/>
</dbReference>
<dbReference type="HAMAP" id="MF_01343_B">
    <property type="entry name" value="Ribosomal_uS15_B"/>
    <property type="match status" value="1"/>
</dbReference>
<dbReference type="InterPro" id="IPR000589">
    <property type="entry name" value="Ribosomal_uS15"/>
</dbReference>
<dbReference type="InterPro" id="IPR005290">
    <property type="entry name" value="Ribosomal_uS15_bac-type"/>
</dbReference>
<dbReference type="InterPro" id="IPR009068">
    <property type="entry name" value="uS15_NS1_RNA-bd_sf"/>
</dbReference>
<dbReference type="NCBIfam" id="TIGR00952">
    <property type="entry name" value="S15_bact"/>
    <property type="match status" value="1"/>
</dbReference>
<dbReference type="PANTHER" id="PTHR23321">
    <property type="entry name" value="RIBOSOMAL PROTEIN S15, BACTERIAL AND ORGANELLAR"/>
    <property type="match status" value="1"/>
</dbReference>
<dbReference type="PANTHER" id="PTHR23321:SF26">
    <property type="entry name" value="SMALL RIBOSOMAL SUBUNIT PROTEIN US15M"/>
    <property type="match status" value="1"/>
</dbReference>
<dbReference type="Pfam" id="PF00312">
    <property type="entry name" value="Ribosomal_S15"/>
    <property type="match status" value="1"/>
</dbReference>
<dbReference type="SMART" id="SM01387">
    <property type="entry name" value="Ribosomal_S15"/>
    <property type="match status" value="1"/>
</dbReference>
<dbReference type="SUPFAM" id="SSF47060">
    <property type="entry name" value="S15/NS1 RNA-binding domain"/>
    <property type="match status" value="1"/>
</dbReference>
<dbReference type="PROSITE" id="PS00362">
    <property type="entry name" value="RIBOSOMAL_S15"/>
    <property type="match status" value="1"/>
</dbReference>
<organism>
    <name type="scientific">Staphylococcus aureus (strain USA300)</name>
    <dbReference type="NCBI Taxonomy" id="367830"/>
    <lineage>
        <taxon>Bacteria</taxon>
        <taxon>Bacillati</taxon>
        <taxon>Bacillota</taxon>
        <taxon>Bacilli</taxon>
        <taxon>Bacillales</taxon>
        <taxon>Staphylococcaceae</taxon>
        <taxon>Staphylococcus</taxon>
    </lineage>
</organism>
<name>RS15_STAA3</name>
<proteinExistence type="inferred from homology"/>
<reference key="1">
    <citation type="journal article" date="2006" name="Lancet">
        <title>Complete genome sequence of USA300, an epidemic clone of community-acquired meticillin-resistant Staphylococcus aureus.</title>
        <authorList>
            <person name="Diep B.A."/>
            <person name="Gill S.R."/>
            <person name="Chang R.F."/>
            <person name="Phan T.H."/>
            <person name="Chen J.H."/>
            <person name="Davidson M.G."/>
            <person name="Lin F."/>
            <person name="Lin J."/>
            <person name="Carleton H.A."/>
            <person name="Mongodin E.F."/>
            <person name="Sensabaugh G.F."/>
            <person name="Perdreau-Remington F."/>
        </authorList>
    </citation>
    <scope>NUCLEOTIDE SEQUENCE [LARGE SCALE GENOMIC DNA]</scope>
    <source>
        <strain>USA300</strain>
    </source>
</reference>
<comment type="function">
    <text evidence="1">One of the primary rRNA binding proteins, it binds directly to 16S rRNA where it helps nucleate assembly of the platform of the 30S subunit by binding and bridging several RNA helices of the 16S rRNA.</text>
</comment>
<comment type="function">
    <text evidence="1">Forms an intersubunit bridge (bridge B4) with the 23S rRNA of the 50S subunit in the ribosome.</text>
</comment>
<comment type="subunit">
    <text evidence="1">Part of the 30S ribosomal subunit. Forms a bridge to the 50S subunit in the 70S ribosome, contacting the 23S rRNA.</text>
</comment>
<comment type="similarity">
    <text evidence="1">Belongs to the universal ribosomal protein uS15 family.</text>
</comment>
<accession>Q2FHG5</accession>
<feature type="chain" id="PRO_0000255535" description="Small ribosomal subunit protein uS15">
    <location>
        <begin position="1"/>
        <end position="89"/>
    </location>
</feature>
<keyword id="KW-0687">Ribonucleoprotein</keyword>
<keyword id="KW-0689">Ribosomal protein</keyword>
<keyword id="KW-0694">RNA-binding</keyword>
<keyword id="KW-0699">rRNA-binding</keyword>